<organismHost>
    <name type="scientific">Solanum tuberosum</name>
    <name type="common">Potato</name>
    <dbReference type="NCBI Taxonomy" id="4113"/>
</organismHost>
<evidence type="ECO:0000250" key="1"/>
<evidence type="ECO:0000255" key="2"/>
<evidence type="ECO:0000305" key="3"/>
<proteinExistence type="inferred from homology"/>
<gene>
    <name type="ORF">ORF3</name>
</gene>
<protein>
    <recommendedName>
        <fullName>Movement protein TGB2</fullName>
    </recommendedName>
    <alternativeName>
        <fullName>12 kDa protein</fullName>
    </alternativeName>
    <alternativeName>
        <fullName>Triple gene block 2 protein</fullName>
        <shortName>TGBp2</shortName>
    </alternativeName>
</protein>
<sequence>MPLTPPPDFTKVYLSAALGVSLALVVWLLIRSTLPVVGDRDHNLPHGGWYRDGTKSVFYNSPGRLNSIEARKAPLLGQPWAIVVLLVLLIWASHKLGRPNCRACAGSHT</sequence>
<feature type="chain" id="PRO_0000222599" description="Movement protein TGB2">
    <location>
        <begin position="1"/>
        <end position="109"/>
    </location>
</feature>
<feature type="topological domain" description="Cytoplasmic" evidence="1">
    <location>
        <begin position="1"/>
        <end position="9"/>
    </location>
</feature>
<feature type="transmembrane region" description="Helical" evidence="2">
    <location>
        <begin position="10"/>
        <end position="30"/>
    </location>
</feature>
<feature type="topological domain" description="Lumenal" evidence="1">
    <location>
        <begin position="31"/>
        <end position="72"/>
    </location>
</feature>
<feature type="transmembrane region" description="Helical" evidence="2">
    <location>
        <begin position="73"/>
        <end position="93"/>
    </location>
</feature>
<feature type="topological domain" description="Cytoplasmic" evidence="1">
    <location>
        <begin position="94"/>
        <end position="109"/>
    </location>
</feature>
<comment type="function">
    <text evidence="1">Plays a role in viral cell-to-cell propagation, by facilitating genome transport to neighboring plant cells through plasmosdesmata,.</text>
</comment>
<comment type="subcellular location">
    <subcellularLocation>
        <location evidence="1">Host endoplasmic reticulum membrane</location>
    </subcellularLocation>
</comment>
<comment type="miscellaneous">
    <text>TGBp1, TGBp2 and TGBp3 seem to act together for cell-to-cell propagation. TGBp1 is the main movement protein that physically cross the plasmodesma with the viral genome. TGBp2 and TGBp3 would facilitate TGBp1 function.</text>
</comment>
<comment type="similarity">
    <text evidence="3">Belongs to the Tymovirales TGBp2 protein family.</text>
</comment>
<reference key="1">
    <citation type="journal article" date="1989" name="J. Gen. Virol.">
        <title>Partial nucleotide sequence of potato virus M RNA shows similarities to protexviruses in gene arrangement and the encoded amino acid sequences.</title>
        <authorList>
            <person name="Rupasov V.V."/>
            <person name="Morozov S.Y."/>
            <person name="Kanyuka K.V."/>
            <person name="Zavriev S.K."/>
        </authorList>
    </citation>
    <scope>NUCLEOTIDE SEQUENCE [GENOMIC RNA]</scope>
</reference>
<reference key="2">
    <citation type="journal article" date="1991" name="J. Gen. Virol.">
        <title>The genome organization of potato virus M RNA.</title>
        <authorList>
            <person name="Zavriev S.K."/>
            <person name="Kanyuka K.V."/>
            <person name="Levay K.E."/>
        </authorList>
    </citation>
    <scope>NUCLEOTIDE SEQUENCE [GENOMIC RNA]</scope>
</reference>
<reference key="3">
    <citation type="journal article" date="1991" name="Mol. Biol. (Mosk.)">
        <title>Complete nucleotide sequence of genomic RNA of the potato M-virus.</title>
        <authorList>
            <person name="Zavriev S.K."/>
            <person name="Kaniuka K.V."/>
            <person name="Levai K.E."/>
        </authorList>
    </citation>
    <scope>NUCLEOTIDE SEQUENCE [GENOMIC RNA]</scope>
</reference>
<name>TGB2_PVMR</name>
<dbReference type="EMBL" id="D14449">
    <property type="protein sequence ID" value="BAA03341.1"/>
    <property type="molecule type" value="Genomic_RNA"/>
</dbReference>
<dbReference type="PIR" id="PN0003">
    <property type="entry name" value="WMVYP2"/>
</dbReference>
<dbReference type="RefSeq" id="NP_056769.1">
    <property type="nucleotide sequence ID" value="NC_001361.2"/>
</dbReference>
<dbReference type="KEGG" id="vg:1493990"/>
<dbReference type="Proteomes" id="UP000000677">
    <property type="component" value="Segment"/>
</dbReference>
<dbReference type="GO" id="GO:0044167">
    <property type="term" value="C:host cell endoplasmic reticulum membrane"/>
    <property type="evidence" value="ECO:0007669"/>
    <property type="project" value="UniProtKB-SubCell"/>
</dbReference>
<dbReference type="GO" id="GO:0016020">
    <property type="term" value="C:membrane"/>
    <property type="evidence" value="ECO:0007669"/>
    <property type="project" value="UniProtKB-KW"/>
</dbReference>
<dbReference type="GO" id="GO:0046740">
    <property type="term" value="P:transport of virus in host, cell to cell"/>
    <property type="evidence" value="ECO:0007669"/>
    <property type="project" value="UniProtKB-KW"/>
</dbReference>
<dbReference type="InterPro" id="IPR001896">
    <property type="entry name" value="Plant_vir_prot"/>
</dbReference>
<dbReference type="Pfam" id="PF01307">
    <property type="entry name" value="Plant_vir_prot"/>
    <property type="match status" value="1"/>
</dbReference>
<keyword id="KW-1038">Host endoplasmic reticulum</keyword>
<keyword id="KW-1043">Host membrane</keyword>
<keyword id="KW-0472">Membrane</keyword>
<keyword id="KW-1185">Reference proteome</keyword>
<keyword id="KW-0812">Transmembrane</keyword>
<keyword id="KW-1133">Transmembrane helix</keyword>
<keyword id="KW-0813">Transport</keyword>
<keyword id="KW-0916">Viral movement protein</keyword>
<organism>
    <name type="scientific">Potato virus M (strain Russian)</name>
    <name type="common">PVM</name>
    <dbReference type="NCBI Taxonomy" id="12168"/>
    <lineage>
        <taxon>Viruses</taxon>
        <taxon>Riboviria</taxon>
        <taxon>Orthornavirae</taxon>
        <taxon>Kitrinoviricota</taxon>
        <taxon>Alsuviricetes</taxon>
        <taxon>Tymovirales</taxon>
        <taxon>Betaflexiviridae</taxon>
        <taxon>Quinvirinae</taxon>
        <taxon>Carlavirus</taxon>
        <taxon>Potato virus M</taxon>
    </lineage>
</organism>
<accession>P17527</accession>